<name>YBEY_PSEPF</name>
<comment type="function">
    <text evidence="1">Single strand-specific metallo-endoribonuclease involved in late-stage 70S ribosome quality control and in maturation of the 3' terminus of the 16S rRNA.</text>
</comment>
<comment type="cofactor">
    <cofactor evidence="1">
        <name>Zn(2+)</name>
        <dbReference type="ChEBI" id="CHEBI:29105"/>
    </cofactor>
    <text evidence="1">Binds 1 zinc ion.</text>
</comment>
<comment type="subcellular location">
    <subcellularLocation>
        <location evidence="1">Cytoplasm</location>
    </subcellularLocation>
</comment>
<comment type="similarity">
    <text evidence="1">Belongs to the endoribonuclease YbeY family.</text>
</comment>
<keyword id="KW-0963">Cytoplasm</keyword>
<keyword id="KW-0255">Endonuclease</keyword>
<keyword id="KW-0378">Hydrolase</keyword>
<keyword id="KW-0479">Metal-binding</keyword>
<keyword id="KW-0540">Nuclease</keyword>
<keyword id="KW-0690">Ribosome biogenesis</keyword>
<keyword id="KW-0698">rRNA processing</keyword>
<keyword id="KW-0862">Zinc</keyword>
<accession>Q3K6B5</accession>
<gene>
    <name evidence="1" type="primary">ybeY</name>
    <name type="ordered locus">Pfl01_4952</name>
</gene>
<organism>
    <name type="scientific">Pseudomonas fluorescens (strain Pf0-1)</name>
    <dbReference type="NCBI Taxonomy" id="205922"/>
    <lineage>
        <taxon>Bacteria</taxon>
        <taxon>Pseudomonadati</taxon>
        <taxon>Pseudomonadota</taxon>
        <taxon>Gammaproteobacteria</taxon>
        <taxon>Pseudomonadales</taxon>
        <taxon>Pseudomonadaceae</taxon>
        <taxon>Pseudomonas</taxon>
    </lineage>
</organism>
<dbReference type="EC" id="3.1.-.-" evidence="1"/>
<dbReference type="EMBL" id="CP000094">
    <property type="protein sequence ID" value="ABA76689.1"/>
    <property type="molecule type" value="Genomic_DNA"/>
</dbReference>
<dbReference type="RefSeq" id="WP_011336085.1">
    <property type="nucleotide sequence ID" value="NC_007492.2"/>
</dbReference>
<dbReference type="SMR" id="Q3K6B5"/>
<dbReference type="KEGG" id="pfo:Pfl01_4952"/>
<dbReference type="eggNOG" id="COG0319">
    <property type="taxonomic scope" value="Bacteria"/>
</dbReference>
<dbReference type="HOGENOM" id="CLU_106710_0_1_6"/>
<dbReference type="Proteomes" id="UP000002704">
    <property type="component" value="Chromosome"/>
</dbReference>
<dbReference type="GO" id="GO:0005737">
    <property type="term" value="C:cytoplasm"/>
    <property type="evidence" value="ECO:0007669"/>
    <property type="project" value="UniProtKB-SubCell"/>
</dbReference>
<dbReference type="GO" id="GO:0004222">
    <property type="term" value="F:metalloendopeptidase activity"/>
    <property type="evidence" value="ECO:0007669"/>
    <property type="project" value="InterPro"/>
</dbReference>
<dbReference type="GO" id="GO:0004521">
    <property type="term" value="F:RNA endonuclease activity"/>
    <property type="evidence" value="ECO:0007669"/>
    <property type="project" value="UniProtKB-UniRule"/>
</dbReference>
<dbReference type="GO" id="GO:0008270">
    <property type="term" value="F:zinc ion binding"/>
    <property type="evidence" value="ECO:0007669"/>
    <property type="project" value="UniProtKB-UniRule"/>
</dbReference>
<dbReference type="GO" id="GO:0006364">
    <property type="term" value="P:rRNA processing"/>
    <property type="evidence" value="ECO:0007669"/>
    <property type="project" value="UniProtKB-UniRule"/>
</dbReference>
<dbReference type="Gene3D" id="3.40.390.30">
    <property type="entry name" value="Metalloproteases ('zincins'), catalytic domain"/>
    <property type="match status" value="1"/>
</dbReference>
<dbReference type="HAMAP" id="MF_00009">
    <property type="entry name" value="Endoribonucl_YbeY"/>
    <property type="match status" value="1"/>
</dbReference>
<dbReference type="InterPro" id="IPR023091">
    <property type="entry name" value="MetalPrtase_cat_dom_sf_prd"/>
</dbReference>
<dbReference type="InterPro" id="IPR002036">
    <property type="entry name" value="YbeY"/>
</dbReference>
<dbReference type="InterPro" id="IPR020549">
    <property type="entry name" value="YbeY_CS"/>
</dbReference>
<dbReference type="NCBIfam" id="TIGR00043">
    <property type="entry name" value="rRNA maturation RNase YbeY"/>
    <property type="match status" value="1"/>
</dbReference>
<dbReference type="PANTHER" id="PTHR46986">
    <property type="entry name" value="ENDORIBONUCLEASE YBEY, CHLOROPLASTIC"/>
    <property type="match status" value="1"/>
</dbReference>
<dbReference type="PANTHER" id="PTHR46986:SF1">
    <property type="entry name" value="ENDORIBONUCLEASE YBEY, CHLOROPLASTIC"/>
    <property type="match status" value="1"/>
</dbReference>
<dbReference type="Pfam" id="PF02130">
    <property type="entry name" value="YbeY"/>
    <property type="match status" value="1"/>
</dbReference>
<dbReference type="SUPFAM" id="SSF55486">
    <property type="entry name" value="Metalloproteases ('zincins'), catalytic domain"/>
    <property type="match status" value="1"/>
</dbReference>
<dbReference type="PROSITE" id="PS01306">
    <property type="entry name" value="UPF0054"/>
    <property type="match status" value="1"/>
</dbReference>
<evidence type="ECO:0000255" key="1">
    <source>
        <dbReference type="HAMAP-Rule" id="MF_00009"/>
    </source>
</evidence>
<evidence type="ECO:0000256" key="2">
    <source>
        <dbReference type="SAM" id="MobiDB-lite"/>
    </source>
</evidence>
<sequence length="164" mass="18686">MLELDLQIATEAPAPTEAEFRQWCELALRQRTADSEMTIRLVDEDEGRELNHTWRHKDYATNVLSFPAEVPDEFLDIPLLGDLVICVAVVEREATEQGKELKAHWAHLVIHGCLHLLGYDHIDDEEAEEMEALERELLAELGYPDPYADDETETSPTVTTKDSE</sequence>
<feature type="chain" id="PRO_0000284278" description="Endoribonuclease YbeY">
    <location>
        <begin position="1"/>
        <end position="164"/>
    </location>
</feature>
<feature type="region of interest" description="Disordered" evidence="2">
    <location>
        <begin position="142"/>
        <end position="164"/>
    </location>
</feature>
<feature type="compositionally biased region" description="Polar residues" evidence="2">
    <location>
        <begin position="154"/>
        <end position="164"/>
    </location>
</feature>
<feature type="binding site" evidence="1">
    <location>
        <position position="111"/>
    </location>
    <ligand>
        <name>Zn(2+)</name>
        <dbReference type="ChEBI" id="CHEBI:29105"/>
        <note>catalytic</note>
    </ligand>
</feature>
<feature type="binding site" evidence="1">
    <location>
        <position position="115"/>
    </location>
    <ligand>
        <name>Zn(2+)</name>
        <dbReference type="ChEBI" id="CHEBI:29105"/>
        <note>catalytic</note>
    </ligand>
</feature>
<feature type="binding site" evidence="1">
    <location>
        <position position="121"/>
    </location>
    <ligand>
        <name>Zn(2+)</name>
        <dbReference type="ChEBI" id="CHEBI:29105"/>
        <note>catalytic</note>
    </ligand>
</feature>
<reference key="1">
    <citation type="journal article" date="2009" name="Genome Biol.">
        <title>Genomic and genetic analyses of diversity and plant interactions of Pseudomonas fluorescens.</title>
        <authorList>
            <person name="Silby M.W."/>
            <person name="Cerdeno-Tarraga A.M."/>
            <person name="Vernikos G.S."/>
            <person name="Giddens S.R."/>
            <person name="Jackson R.W."/>
            <person name="Preston G.M."/>
            <person name="Zhang X.-X."/>
            <person name="Moon C.D."/>
            <person name="Gehrig S.M."/>
            <person name="Godfrey S.A.C."/>
            <person name="Knight C.G."/>
            <person name="Malone J.G."/>
            <person name="Robinson Z."/>
            <person name="Spiers A.J."/>
            <person name="Harris S."/>
            <person name="Challis G.L."/>
            <person name="Yaxley A.M."/>
            <person name="Harris D."/>
            <person name="Seeger K."/>
            <person name="Murphy L."/>
            <person name="Rutter S."/>
            <person name="Squares R."/>
            <person name="Quail M.A."/>
            <person name="Saunders E."/>
            <person name="Mavromatis K."/>
            <person name="Brettin T.S."/>
            <person name="Bentley S.D."/>
            <person name="Hothersall J."/>
            <person name="Stephens E."/>
            <person name="Thomas C.M."/>
            <person name="Parkhill J."/>
            <person name="Levy S.B."/>
            <person name="Rainey P.B."/>
            <person name="Thomson N.R."/>
        </authorList>
    </citation>
    <scope>NUCLEOTIDE SEQUENCE [LARGE SCALE GENOMIC DNA]</scope>
    <source>
        <strain>Pf0-1</strain>
    </source>
</reference>
<proteinExistence type="inferred from homology"/>
<protein>
    <recommendedName>
        <fullName evidence="1">Endoribonuclease YbeY</fullName>
        <ecNumber evidence="1">3.1.-.-</ecNumber>
    </recommendedName>
</protein>